<comment type="function">
    <text evidence="1">Substrate-recognition component of some SCF (SKP1-CUL1-F-box protein)-type E3 ubiquitin ligase complex. Specifically recognizes p53/TP53, promoting its ubiquitination and degradation (By similarity).</text>
</comment>
<comment type="subunit">
    <text evidence="1">Component of some SCF complex, composed of CUL1, SKP1, RBX1 and FBXO42. Interacts (via the kelch domain) with p53/TP53; interaction is direct (By similarity).</text>
</comment>
<feature type="chain" id="PRO_0000119943" description="F-box only protein 42">
    <location>
        <begin position="1"/>
        <end position="717"/>
    </location>
</feature>
<feature type="domain" description="F-box" evidence="3">
    <location>
        <begin position="44"/>
        <end position="93"/>
    </location>
</feature>
<feature type="repeat" description="Kelch 1">
    <location>
        <begin position="132"/>
        <end position="184"/>
    </location>
</feature>
<feature type="repeat" description="Kelch 2">
    <location>
        <begin position="186"/>
        <end position="242"/>
    </location>
</feature>
<feature type="repeat" description="Kelch 3">
    <location>
        <begin position="244"/>
        <end position="293"/>
    </location>
</feature>
<feature type="repeat" description="Kelch 4">
    <location>
        <begin position="295"/>
        <end position="342"/>
    </location>
</feature>
<feature type="region of interest" description="Disordered" evidence="4">
    <location>
        <begin position="1"/>
        <end position="34"/>
    </location>
</feature>
<feature type="region of interest" description="Disordered" evidence="4">
    <location>
        <begin position="361"/>
        <end position="452"/>
    </location>
</feature>
<feature type="region of interest" description="Disordered" evidence="4">
    <location>
        <begin position="570"/>
        <end position="632"/>
    </location>
</feature>
<feature type="compositionally biased region" description="Acidic residues" evidence="4">
    <location>
        <begin position="1"/>
        <end position="30"/>
    </location>
</feature>
<feature type="compositionally biased region" description="Low complexity" evidence="4">
    <location>
        <begin position="363"/>
        <end position="376"/>
    </location>
</feature>
<feature type="compositionally biased region" description="Polar residues" evidence="4">
    <location>
        <begin position="416"/>
        <end position="426"/>
    </location>
</feature>
<feature type="compositionally biased region" description="Low complexity" evidence="4">
    <location>
        <begin position="570"/>
        <end position="595"/>
    </location>
</feature>
<feature type="modified residue" description="Phosphoserine" evidence="6">
    <location>
        <position position="365"/>
    </location>
</feature>
<feature type="modified residue" description="Phosphoserine" evidence="6">
    <location>
        <position position="373"/>
    </location>
</feature>
<feature type="modified residue" description="Phosphothreonine" evidence="2">
    <location>
        <position position="378"/>
    </location>
</feature>
<feature type="modified residue" description="Phosphoserine" evidence="6">
    <location>
        <position position="552"/>
    </location>
</feature>
<feature type="sequence conflict" description="In Ref. 1; BAC26160." evidence="5" ref="1">
    <original>S</original>
    <variation>Y</variation>
    <location>
        <position position="48"/>
    </location>
</feature>
<feature type="sequence conflict" description="In Ref. 3; AAH03960." evidence="5" ref="3">
    <original>I</original>
    <variation>T</variation>
    <location>
        <position position="518"/>
    </location>
</feature>
<feature type="sequence conflict" description="In Ref. 3; AAH03960." evidence="5" ref="3">
    <original>S</original>
    <variation>P</variation>
    <location>
        <position position="602"/>
    </location>
</feature>
<sequence length="717" mass="77777">MASSSDSEDDSVMAVDQEETALEGTMEQDEDPHPVLEVEETRHNRSMSELPEEVLEYILSFLSPYQEHKTAALVCKQWYRLIKGVAHQCYHGFMKAVQEGNIQWESRTYPYPGTPITQRFSHSACYYDANQSMYVFGGCTQSSCNAAFNDLWRLDLNSKEWIRPLASGSYPSPKAGATLVVYKDLLVLFGGWTRPSPYPLHQPERFFDEIHTYSPSKNWWNCIVTTHGPPPMAGHSSCVIGDKMIVFGGSLGSRQMSNEVWVLDLEQWAWSKPNISGPSPHPRGGQSQIVIDDTTLLILGGCGGPNALFKDAWLLHMHPGPWAWQPLKVENEDHGAPELWCHPACRVGQCVVVFSQAPSGRAPLSPSLNSRPSPISATPPALVPETREYRSQSPVRSMDEAPCVNGRWGTLRPRAQRQTPSGSREGSLSPARGDGSPILNGGNLSPGTVAVGGASLDSPVQVVSPSTPSASDGYDLKVGLSLAPRRGSLPDQKDLRLSSIDLNWDLKSASSSSHVDSIDNRTVAGSVRHPPEQTNGVHTPPHVASALAGAVSPGALRRSLEAIKAMSSKGPSASAALSPPLGSSPSSPGSQSLSSGETVPNSRPGPAQGDGHSLPPIARRLGHHPPQSLNVGKPLYQSMNCKPMQMYVLDIKDTKEKGRVKWKVFTSSSVVGPPETSLHTVVQGRGELIVFGGLMDKKQNVKYYPKTNALYFVRAKR</sequence>
<reference key="1">
    <citation type="journal article" date="2005" name="Science">
        <title>The transcriptional landscape of the mammalian genome.</title>
        <authorList>
            <person name="Carninci P."/>
            <person name="Kasukawa T."/>
            <person name="Katayama S."/>
            <person name="Gough J."/>
            <person name="Frith M.C."/>
            <person name="Maeda N."/>
            <person name="Oyama R."/>
            <person name="Ravasi T."/>
            <person name="Lenhard B."/>
            <person name="Wells C."/>
            <person name="Kodzius R."/>
            <person name="Shimokawa K."/>
            <person name="Bajic V.B."/>
            <person name="Brenner S.E."/>
            <person name="Batalov S."/>
            <person name="Forrest A.R."/>
            <person name="Zavolan M."/>
            <person name="Davis M.J."/>
            <person name="Wilming L.G."/>
            <person name="Aidinis V."/>
            <person name="Allen J.E."/>
            <person name="Ambesi-Impiombato A."/>
            <person name="Apweiler R."/>
            <person name="Aturaliya R.N."/>
            <person name="Bailey T.L."/>
            <person name="Bansal M."/>
            <person name="Baxter L."/>
            <person name="Beisel K.W."/>
            <person name="Bersano T."/>
            <person name="Bono H."/>
            <person name="Chalk A.M."/>
            <person name="Chiu K.P."/>
            <person name="Choudhary V."/>
            <person name="Christoffels A."/>
            <person name="Clutterbuck D.R."/>
            <person name="Crowe M.L."/>
            <person name="Dalla E."/>
            <person name="Dalrymple B.P."/>
            <person name="de Bono B."/>
            <person name="Della Gatta G."/>
            <person name="di Bernardo D."/>
            <person name="Down T."/>
            <person name="Engstrom P."/>
            <person name="Fagiolini M."/>
            <person name="Faulkner G."/>
            <person name="Fletcher C.F."/>
            <person name="Fukushima T."/>
            <person name="Furuno M."/>
            <person name="Futaki S."/>
            <person name="Gariboldi M."/>
            <person name="Georgii-Hemming P."/>
            <person name="Gingeras T.R."/>
            <person name="Gojobori T."/>
            <person name="Green R.E."/>
            <person name="Gustincich S."/>
            <person name="Harbers M."/>
            <person name="Hayashi Y."/>
            <person name="Hensch T.K."/>
            <person name="Hirokawa N."/>
            <person name="Hill D."/>
            <person name="Huminiecki L."/>
            <person name="Iacono M."/>
            <person name="Ikeo K."/>
            <person name="Iwama A."/>
            <person name="Ishikawa T."/>
            <person name="Jakt M."/>
            <person name="Kanapin A."/>
            <person name="Katoh M."/>
            <person name="Kawasawa Y."/>
            <person name="Kelso J."/>
            <person name="Kitamura H."/>
            <person name="Kitano H."/>
            <person name="Kollias G."/>
            <person name="Krishnan S.P."/>
            <person name="Kruger A."/>
            <person name="Kummerfeld S.K."/>
            <person name="Kurochkin I.V."/>
            <person name="Lareau L.F."/>
            <person name="Lazarevic D."/>
            <person name="Lipovich L."/>
            <person name="Liu J."/>
            <person name="Liuni S."/>
            <person name="McWilliam S."/>
            <person name="Madan Babu M."/>
            <person name="Madera M."/>
            <person name="Marchionni L."/>
            <person name="Matsuda H."/>
            <person name="Matsuzawa S."/>
            <person name="Miki H."/>
            <person name="Mignone F."/>
            <person name="Miyake S."/>
            <person name="Morris K."/>
            <person name="Mottagui-Tabar S."/>
            <person name="Mulder N."/>
            <person name="Nakano N."/>
            <person name="Nakauchi H."/>
            <person name="Ng P."/>
            <person name="Nilsson R."/>
            <person name="Nishiguchi S."/>
            <person name="Nishikawa S."/>
            <person name="Nori F."/>
            <person name="Ohara O."/>
            <person name="Okazaki Y."/>
            <person name="Orlando V."/>
            <person name="Pang K.C."/>
            <person name="Pavan W.J."/>
            <person name="Pavesi G."/>
            <person name="Pesole G."/>
            <person name="Petrovsky N."/>
            <person name="Piazza S."/>
            <person name="Reed J."/>
            <person name="Reid J.F."/>
            <person name="Ring B.Z."/>
            <person name="Ringwald M."/>
            <person name="Rost B."/>
            <person name="Ruan Y."/>
            <person name="Salzberg S.L."/>
            <person name="Sandelin A."/>
            <person name="Schneider C."/>
            <person name="Schoenbach C."/>
            <person name="Sekiguchi K."/>
            <person name="Semple C.A."/>
            <person name="Seno S."/>
            <person name="Sessa L."/>
            <person name="Sheng Y."/>
            <person name="Shibata Y."/>
            <person name="Shimada H."/>
            <person name="Shimada K."/>
            <person name="Silva D."/>
            <person name="Sinclair B."/>
            <person name="Sperling S."/>
            <person name="Stupka E."/>
            <person name="Sugiura K."/>
            <person name="Sultana R."/>
            <person name="Takenaka Y."/>
            <person name="Taki K."/>
            <person name="Tammoja K."/>
            <person name="Tan S.L."/>
            <person name="Tang S."/>
            <person name="Taylor M.S."/>
            <person name="Tegner J."/>
            <person name="Teichmann S.A."/>
            <person name="Ueda H.R."/>
            <person name="van Nimwegen E."/>
            <person name="Verardo R."/>
            <person name="Wei C.L."/>
            <person name="Yagi K."/>
            <person name="Yamanishi H."/>
            <person name="Zabarovsky E."/>
            <person name="Zhu S."/>
            <person name="Zimmer A."/>
            <person name="Hide W."/>
            <person name="Bult C."/>
            <person name="Grimmond S.M."/>
            <person name="Teasdale R.D."/>
            <person name="Liu E.T."/>
            <person name="Brusic V."/>
            <person name="Quackenbush J."/>
            <person name="Wahlestedt C."/>
            <person name="Mattick J.S."/>
            <person name="Hume D.A."/>
            <person name="Kai C."/>
            <person name="Sasaki D."/>
            <person name="Tomaru Y."/>
            <person name="Fukuda S."/>
            <person name="Kanamori-Katayama M."/>
            <person name="Suzuki M."/>
            <person name="Aoki J."/>
            <person name="Arakawa T."/>
            <person name="Iida J."/>
            <person name="Imamura K."/>
            <person name="Itoh M."/>
            <person name="Kato T."/>
            <person name="Kawaji H."/>
            <person name="Kawagashira N."/>
            <person name="Kawashima T."/>
            <person name="Kojima M."/>
            <person name="Kondo S."/>
            <person name="Konno H."/>
            <person name="Nakano K."/>
            <person name="Ninomiya N."/>
            <person name="Nishio T."/>
            <person name="Okada M."/>
            <person name="Plessy C."/>
            <person name="Shibata K."/>
            <person name="Shiraki T."/>
            <person name="Suzuki S."/>
            <person name="Tagami M."/>
            <person name="Waki K."/>
            <person name="Watahiki A."/>
            <person name="Okamura-Oho Y."/>
            <person name="Suzuki H."/>
            <person name="Kawai J."/>
            <person name="Hayashizaki Y."/>
        </authorList>
    </citation>
    <scope>NUCLEOTIDE SEQUENCE [LARGE SCALE MRNA]</scope>
    <source>
        <strain>C57BL/6J</strain>
        <tissue>Skin</tissue>
    </source>
</reference>
<reference key="2">
    <citation type="journal article" date="2009" name="PLoS Biol.">
        <title>Lineage-specific biology revealed by a finished genome assembly of the mouse.</title>
        <authorList>
            <person name="Church D.M."/>
            <person name="Goodstadt L."/>
            <person name="Hillier L.W."/>
            <person name="Zody M.C."/>
            <person name="Goldstein S."/>
            <person name="She X."/>
            <person name="Bult C.J."/>
            <person name="Agarwala R."/>
            <person name="Cherry J.L."/>
            <person name="DiCuccio M."/>
            <person name="Hlavina W."/>
            <person name="Kapustin Y."/>
            <person name="Meric P."/>
            <person name="Maglott D."/>
            <person name="Birtle Z."/>
            <person name="Marques A.C."/>
            <person name="Graves T."/>
            <person name="Zhou S."/>
            <person name="Teague B."/>
            <person name="Potamousis K."/>
            <person name="Churas C."/>
            <person name="Place M."/>
            <person name="Herschleb J."/>
            <person name="Runnheim R."/>
            <person name="Forrest D."/>
            <person name="Amos-Landgraf J."/>
            <person name="Schwartz D.C."/>
            <person name="Cheng Z."/>
            <person name="Lindblad-Toh K."/>
            <person name="Eichler E.E."/>
            <person name="Ponting C.P."/>
        </authorList>
    </citation>
    <scope>NUCLEOTIDE SEQUENCE [LARGE SCALE GENOMIC DNA]</scope>
    <source>
        <strain>C57BL/6J</strain>
    </source>
</reference>
<reference key="3">
    <citation type="journal article" date="2004" name="Genome Res.">
        <title>The status, quality, and expansion of the NIH full-length cDNA project: the Mammalian Gene Collection (MGC).</title>
        <authorList>
            <consortium name="The MGC Project Team"/>
        </authorList>
    </citation>
    <scope>NUCLEOTIDE SEQUENCE [LARGE SCALE MRNA]</scope>
    <source>
        <strain>C57BL/6J</strain>
        <tissue>Brain</tissue>
        <tissue>Mammary gland</tissue>
    </source>
</reference>
<reference key="4">
    <citation type="journal article" date="2010" name="Cell">
        <title>A tissue-specific atlas of mouse protein phosphorylation and expression.</title>
        <authorList>
            <person name="Huttlin E.L."/>
            <person name="Jedrychowski M.P."/>
            <person name="Elias J.E."/>
            <person name="Goswami T."/>
            <person name="Rad R."/>
            <person name="Beausoleil S.A."/>
            <person name="Villen J."/>
            <person name="Haas W."/>
            <person name="Sowa M.E."/>
            <person name="Gygi S.P."/>
        </authorList>
    </citation>
    <scope>PHOSPHORYLATION [LARGE SCALE ANALYSIS] AT SER-365; SER-373 AND SER-552</scope>
    <scope>IDENTIFICATION BY MASS SPECTROMETRY [LARGE SCALE ANALYSIS]</scope>
    <source>
        <tissue>Heart</tissue>
        <tissue>Lung</tissue>
        <tissue>Spleen</tissue>
    </source>
</reference>
<name>FBX42_MOUSE</name>
<keyword id="KW-0880">Kelch repeat</keyword>
<keyword id="KW-0597">Phosphoprotein</keyword>
<keyword id="KW-1185">Reference proteome</keyword>
<keyword id="KW-0677">Repeat</keyword>
<keyword id="KW-0833">Ubl conjugation pathway</keyword>
<dbReference type="EMBL" id="AK028867">
    <property type="protein sequence ID" value="BAC26160.1"/>
    <property type="molecule type" value="mRNA"/>
</dbReference>
<dbReference type="EMBL" id="AL607087">
    <property type="status" value="NOT_ANNOTATED_CDS"/>
    <property type="molecule type" value="Genomic_DNA"/>
</dbReference>
<dbReference type="EMBL" id="BC003960">
    <property type="protein sequence ID" value="AAH03960.1"/>
    <property type="molecule type" value="mRNA"/>
</dbReference>
<dbReference type="EMBL" id="BC058667">
    <property type="protein sequence ID" value="AAH58667.1"/>
    <property type="molecule type" value="mRNA"/>
</dbReference>
<dbReference type="CCDS" id="CCDS18866.1"/>
<dbReference type="RefSeq" id="NP_766106.2">
    <property type="nucleotide sequence ID" value="NM_172518.3"/>
</dbReference>
<dbReference type="SMR" id="Q6PDJ6"/>
<dbReference type="BioGRID" id="229445">
    <property type="interactions" value="3"/>
</dbReference>
<dbReference type="FunCoup" id="Q6PDJ6">
    <property type="interactions" value="664"/>
</dbReference>
<dbReference type="STRING" id="10090.ENSMUSP00000030757"/>
<dbReference type="GlyGen" id="Q6PDJ6">
    <property type="glycosylation" value="3 sites, 1 N-linked glycan (1 site)"/>
</dbReference>
<dbReference type="iPTMnet" id="Q6PDJ6"/>
<dbReference type="PhosphoSitePlus" id="Q6PDJ6"/>
<dbReference type="PaxDb" id="10090-ENSMUSP00000030757"/>
<dbReference type="ProteomicsDB" id="271677"/>
<dbReference type="Pumba" id="Q6PDJ6"/>
<dbReference type="Antibodypedia" id="14535">
    <property type="antibodies" value="326 antibodies from 21 providers"/>
</dbReference>
<dbReference type="DNASU" id="213499"/>
<dbReference type="Ensembl" id="ENSMUST00000030757.10">
    <property type="protein sequence ID" value="ENSMUSP00000030757.10"/>
    <property type="gene ID" value="ENSMUSG00000028920.10"/>
</dbReference>
<dbReference type="GeneID" id="213499"/>
<dbReference type="KEGG" id="mmu:213499"/>
<dbReference type="UCSC" id="uc008vnz.2">
    <property type="organism name" value="mouse"/>
</dbReference>
<dbReference type="AGR" id="MGI:1924992"/>
<dbReference type="CTD" id="54455"/>
<dbReference type="MGI" id="MGI:1924992">
    <property type="gene designation" value="Fbxo42"/>
</dbReference>
<dbReference type="VEuPathDB" id="HostDB:ENSMUSG00000028920"/>
<dbReference type="eggNOG" id="KOG0379">
    <property type="taxonomic scope" value="Eukaryota"/>
</dbReference>
<dbReference type="GeneTree" id="ENSGT00440000039706"/>
<dbReference type="HOGENOM" id="CLU_023579_0_0_1"/>
<dbReference type="InParanoid" id="Q6PDJ6"/>
<dbReference type="OMA" id="AWLLHIH"/>
<dbReference type="OrthoDB" id="9973021at2759"/>
<dbReference type="PhylomeDB" id="Q6PDJ6"/>
<dbReference type="TreeFam" id="TF324505"/>
<dbReference type="BioGRID-ORCS" id="213499">
    <property type="hits" value="9 hits in 78 CRISPR screens"/>
</dbReference>
<dbReference type="ChiTaRS" id="Fbxo42">
    <property type="organism name" value="mouse"/>
</dbReference>
<dbReference type="PRO" id="PR:Q6PDJ6"/>
<dbReference type="Proteomes" id="UP000000589">
    <property type="component" value="Chromosome 4"/>
</dbReference>
<dbReference type="RNAct" id="Q6PDJ6">
    <property type="molecule type" value="protein"/>
</dbReference>
<dbReference type="Bgee" id="ENSMUSG00000028920">
    <property type="expression patterns" value="Expressed in lumbar dorsal root ganglion and 236 other cell types or tissues"/>
</dbReference>
<dbReference type="CDD" id="cd22110">
    <property type="entry name" value="F-box_FBXO42"/>
    <property type="match status" value="1"/>
</dbReference>
<dbReference type="Gene3D" id="1.20.1280.50">
    <property type="match status" value="1"/>
</dbReference>
<dbReference type="Gene3D" id="2.120.10.80">
    <property type="entry name" value="Kelch-type beta propeller"/>
    <property type="match status" value="1"/>
</dbReference>
<dbReference type="InterPro" id="IPR036047">
    <property type="entry name" value="F-box-like_dom_sf"/>
</dbReference>
<dbReference type="InterPro" id="IPR001810">
    <property type="entry name" value="F-box_dom"/>
</dbReference>
<dbReference type="InterPro" id="IPR052821">
    <property type="entry name" value="F-box_only_SRC"/>
</dbReference>
<dbReference type="InterPro" id="IPR015915">
    <property type="entry name" value="Kelch-typ_b-propeller"/>
</dbReference>
<dbReference type="PANTHER" id="PTHR46432">
    <property type="entry name" value="F-BOX ONLY PROTEIN 42"/>
    <property type="match status" value="1"/>
</dbReference>
<dbReference type="PANTHER" id="PTHR46432:SF1">
    <property type="entry name" value="F-BOX ONLY PROTEIN 42"/>
    <property type="match status" value="1"/>
</dbReference>
<dbReference type="Pfam" id="PF12937">
    <property type="entry name" value="F-box-like"/>
    <property type="match status" value="1"/>
</dbReference>
<dbReference type="Pfam" id="PF13415">
    <property type="entry name" value="Kelch_3"/>
    <property type="match status" value="1"/>
</dbReference>
<dbReference type="Pfam" id="PF24681">
    <property type="entry name" value="Kelch_KLHDC2_KLHL20_DRC7"/>
    <property type="match status" value="1"/>
</dbReference>
<dbReference type="SMART" id="SM00256">
    <property type="entry name" value="FBOX"/>
    <property type="match status" value="1"/>
</dbReference>
<dbReference type="SUPFAM" id="SSF81383">
    <property type="entry name" value="F-box domain"/>
    <property type="match status" value="1"/>
</dbReference>
<dbReference type="SUPFAM" id="SSF117281">
    <property type="entry name" value="Kelch motif"/>
    <property type="match status" value="1"/>
</dbReference>
<dbReference type="PROSITE" id="PS50181">
    <property type="entry name" value="FBOX"/>
    <property type="match status" value="1"/>
</dbReference>
<accession>Q6PDJ6</accession>
<accession>A2A824</accession>
<accession>Q8CE76</accession>
<accession>Q99KY2</accession>
<organism>
    <name type="scientific">Mus musculus</name>
    <name type="common">Mouse</name>
    <dbReference type="NCBI Taxonomy" id="10090"/>
    <lineage>
        <taxon>Eukaryota</taxon>
        <taxon>Metazoa</taxon>
        <taxon>Chordata</taxon>
        <taxon>Craniata</taxon>
        <taxon>Vertebrata</taxon>
        <taxon>Euteleostomi</taxon>
        <taxon>Mammalia</taxon>
        <taxon>Eutheria</taxon>
        <taxon>Euarchontoglires</taxon>
        <taxon>Glires</taxon>
        <taxon>Rodentia</taxon>
        <taxon>Myomorpha</taxon>
        <taxon>Muroidea</taxon>
        <taxon>Muridae</taxon>
        <taxon>Murinae</taxon>
        <taxon>Mus</taxon>
        <taxon>Mus</taxon>
    </lineage>
</organism>
<protein>
    <recommendedName>
        <fullName>F-box only protein 42</fullName>
    </recommendedName>
</protein>
<proteinExistence type="evidence at protein level"/>
<gene>
    <name type="primary">Fbxo42</name>
</gene>
<evidence type="ECO:0000250" key="1"/>
<evidence type="ECO:0000250" key="2">
    <source>
        <dbReference type="UniProtKB" id="Q6P3S6"/>
    </source>
</evidence>
<evidence type="ECO:0000255" key="3">
    <source>
        <dbReference type="PROSITE-ProRule" id="PRU00080"/>
    </source>
</evidence>
<evidence type="ECO:0000256" key="4">
    <source>
        <dbReference type="SAM" id="MobiDB-lite"/>
    </source>
</evidence>
<evidence type="ECO:0000305" key="5"/>
<evidence type="ECO:0007744" key="6">
    <source>
    </source>
</evidence>